<evidence type="ECO:0000255" key="1"/>
<evidence type="ECO:0000269" key="2">
    <source>
    </source>
</evidence>
<evidence type="ECO:0000305" key="3"/>
<protein>
    <recommendedName>
        <fullName>Protein Iojap-related, mitochondrial</fullName>
    </recommendedName>
</protein>
<reference key="1">
    <citation type="journal article" date="2000" name="Nature">
        <title>Sequence and analysis of chromosome 1 of the plant Arabidopsis thaliana.</title>
        <authorList>
            <person name="Theologis A."/>
            <person name="Ecker J.R."/>
            <person name="Palm C.J."/>
            <person name="Federspiel N.A."/>
            <person name="Kaul S."/>
            <person name="White O."/>
            <person name="Alonso J."/>
            <person name="Altafi H."/>
            <person name="Araujo R."/>
            <person name="Bowman C.L."/>
            <person name="Brooks S.Y."/>
            <person name="Buehler E."/>
            <person name="Chan A."/>
            <person name="Chao Q."/>
            <person name="Chen H."/>
            <person name="Cheuk R.F."/>
            <person name="Chin C.W."/>
            <person name="Chung M.K."/>
            <person name="Conn L."/>
            <person name="Conway A.B."/>
            <person name="Conway A.R."/>
            <person name="Creasy T.H."/>
            <person name="Dewar K."/>
            <person name="Dunn P."/>
            <person name="Etgu P."/>
            <person name="Feldblyum T.V."/>
            <person name="Feng J.-D."/>
            <person name="Fong B."/>
            <person name="Fujii C.Y."/>
            <person name="Gill J.E."/>
            <person name="Goldsmith A.D."/>
            <person name="Haas B."/>
            <person name="Hansen N.F."/>
            <person name="Hughes B."/>
            <person name="Huizar L."/>
            <person name="Hunter J.L."/>
            <person name="Jenkins J."/>
            <person name="Johnson-Hopson C."/>
            <person name="Khan S."/>
            <person name="Khaykin E."/>
            <person name="Kim C.J."/>
            <person name="Koo H.L."/>
            <person name="Kremenetskaia I."/>
            <person name="Kurtz D.B."/>
            <person name="Kwan A."/>
            <person name="Lam B."/>
            <person name="Langin-Hooper S."/>
            <person name="Lee A."/>
            <person name="Lee J.M."/>
            <person name="Lenz C.A."/>
            <person name="Li J.H."/>
            <person name="Li Y.-P."/>
            <person name="Lin X."/>
            <person name="Liu S.X."/>
            <person name="Liu Z.A."/>
            <person name="Luros J.S."/>
            <person name="Maiti R."/>
            <person name="Marziali A."/>
            <person name="Militscher J."/>
            <person name="Miranda M."/>
            <person name="Nguyen M."/>
            <person name="Nierman W.C."/>
            <person name="Osborne B.I."/>
            <person name="Pai G."/>
            <person name="Peterson J."/>
            <person name="Pham P.K."/>
            <person name="Rizzo M."/>
            <person name="Rooney T."/>
            <person name="Rowley D."/>
            <person name="Sakano H."/>
            <person name="Salzberg S.L."/>
            <person name="Schwartz J.R."/>
            <person name="Shinn P."/>
            <person name="Southwick A.M."/>
            <person name="Sun H."/>
            <person name="Tallon L.J."/>
            <person name="Tambunga G."/>
            <person name="Toriumi M.J."/>
            <person name="Town C.D."/>
            <person name="Utterback T."/>
            <person name="Van Aken S."/>
            <person name="Vaysberg M."/>
            <person name="Vysotskaia V.S."/>
            <person name="Walker M."/>
            <person name="Wu D."/>
            <person name="Yu G."/>
            <person name="Fraser C.M."/>
            <person name="Venter J.C."/>
            <person name="Davis R.W."/>
        </authorList>
    </citation>
    <scope>NUCLEOTIDE SEQUENCE [LARGE SCALE GENOMIC DNA]</scope>
    <source>
        <strain>cv. Columbia</strain>
    </source>
</reference>
<reference key="2">
    <citation type="journal article" date="2017" name="Plant J.">
        <title>Araport11: a complete reannotation of the Arabidopsis thaliana reference genome.</title>
        <authorList>
            <person name="Cheng C.Y."/>
            <person name="Krishnakumar V."/>
            <person name="Chan A.P."/>
            <person name="Thibaud-Nissen F."/>
            <person name="Schobel S."/>
            <person name="Town C.D."/>
        </authorList>
    </citation>
    <scope>GENOME REANNOTATION</scope>
    <source>
        <strain>cv. Columbia</strain>
    </source>
</reference>
<reference key="3">
    <citation type="submission" date="2006-06" db="EMBL/GenBank/DDBJ databases">
        <title>Arabidopsis ORF clones.</title>
        <authorList>
            <person name="Kim C.J."/>
            <person name="Chen H."/>
            <person name="Quinitio C."/>
            <person name="Shinn P."/>
            <person name="Ecker J.R."/>
        </authorList>
    </citation>
    <scope>NUCLEOTIDE SEQUENCE [LARGE SCALE MRNA]</scope>
</reference>
<reference key="4">
    <citation type="submission" date="2006-07" db="EMBL/GenBank/DDBJ databases">
        <title>Large-scale analysis of RIKEN Arabidopsis full-length (RAFL) cDNAs.</title>
        <authorList>
            <person name="Totoki Y."/>
            <person name="Seki M."/>
            <person name="Ishida J."/>
            <person name="Nakajima M."/>
            <person name="Enju A."/>
            <person name="Kamiya A."/>
            <person name="Narusaka M."/>
            <person name="Shin-i T."/>
            <person name="Nakagawa M."/>
            <person name="Sakamoto N."/>
            <person name="Oishi K."/>
            <person name="Kohara Y."/>
            <person name="Kobayashi M."/>
            <person name="Toyoda A."/>
            <person name="Sakaki Y."/>
            <person name="Sakurai T."/>
            <person name="Iida K."/>
            <person name="Akiyama K."/>
            <person name="Satou M."/>
            <person name="Toyoda T."/>
            <person name="Konagaya A."/>
            <person name="Carninci P."/>
            <person name="Kawai J."/>
            <person name="Hayashizaki Y."/>
            <person name="Shinozaki K."/>
        </authorList>
    </citation>
    <scope>NUCLEOTIDE SEQUENCE [LARGE SCALE MRNA]</scope>
    <source>
        <strain>cv. Columbia</strain>
    </source>
</reference>
<reference key="5">
    <citation type="submission" date="2002-03" db="EMBL/GenBank/DDBJ databases">
        <title>Full-length cDNA from Arabidopsis thaliana.</title>
        <authorList>
            <person name="Brover V.V."/>
            <person name="Troukhan M.E."/>
            <person name="Alexandrov N.A."/>
            <person name="Lu Y.-P."/>
            <person name="Flavell R.B."/>
            <person name="Feldmann K.A."/>
        </authorList>
    </citation>
    <scope>NUCLEOTIDE SEQUENCE [LARGE SCALE MRNA]</scope>
</reference>
<reference key="6">
    <citation type="journal article" date="2011" name="Plant Physiol.">
        <title>In-depth temporal transcriptome profiling reveals a crucial developmental switch with roles for RNA processing and organelle metabolism that are essential for germination in Arabidopsis.</title>
        <authorList>
            <person name="Narsai R."/>
            <person name="Law S.R."/>
            <person name="Carrie C."/>
            <person name="Xu L."/>
            <person name="Whelan J."/>
        </authorList>
    </citation>
    <scope>FUNCTION</scope>
    <scope>SUBCELLULAR LOCATION</scope>
</reference>
<dbReference type="EMBL" id="AC011020">
    <property type="protein sequence ID" value="AAG52301.1"/>
    <property type="molecule type" value="Genomic_DNA"/>
</dbReference>
<dbReference type="EMBL" id="CP002684">
    <property type="protein sequence ID" value="AEE34671.1"/>
    <property type="molecule type" value="Genomic_DNA"/>
</dbReference>
<dbReference type="EMBL" id="BT025743">
    <property type="protein sequence ID" value="ABF83633.1"/>
    <property type="molecule type" value="mRNA"/>
</dbReference>
<dbReference type="EMBL" id="AK175676">
    <property type="protein sequence ID" value="BAD43439.1"/>
    <property type="molecule type" value="mRNA"/>
</dbReference>
<dbReference type="EMBL" id="AK176034">
    <property type="protein sequence ID" value="BAD43797.1"/>
    <property type="molecule type" value="mRNA"/>
</dbReference>
<dbReference type="EMBL" id="AK229872">
    <property type="protein sequence ID" value="BAF01701.1"/>
    <property type="molecule type" value="mRNA"/>
</dbReference>
<dbReference type="EMBL" id="AK229957">
    <property type="protein sequence ID" value="BAF01783.1"/>
    <property type="molecule type" value="mRNA"/>
</dbReference>
<dbReference type="EMBL" id="AY084358">
    <property type="protein sequence ID" value="AAM60940.1"/>
    <property type="molecule type" value="mRNA"/>
</dbReference>
<dbReference type="RefSeq" id="NP_564901.1">
    <property type="nucleotide sequence ID" value="NM_105428.4"/>
</dbReference>
<dbReference type="SMR" id="Q9CAF9"/>
<dbReference type="FunCoup" id="Q9CAF9">
    <property type="interactions" value="10"/>
</dbReference>
<dbReference type="STRING" id="3702.Q9CAF9"/>
<dbReference type="PaxDb" id="3702-AT1G67620.1"/>
<dbReference type="ProteomicsDB" id="247181"/>
<dbReference type="EnsemblPlants" id="AT1G67620.1">
    <property type="protein sequence ID" value="AT1G67620.1"/>
    <property type="gene ID" value="AT1G67620"/>
</dbReference>
<dbReference type="GeneID" id="843083"/>
<dbReference type="Gramene" id="AT1G67620.1">
    <property type="protein sequence ID" value="AT1G67620.1"/>
    <property type="gene ID" value="AT1G67620"/>
</dbReference>
<dbReference type="KEGG" id="ath:AT1G67620"/>
<dbReference type="Araport" id="AT1G67620"/>
<dbReference type="TAIR" id="AT1G67620"/>
<dbReference type="eggNOG" id="KOG3212">
    <property type="taxonomic scope" value="Eukaryota"/>
</dbReference>
<dbReference type="HOGENOM" id="CLU_092688_3_0_1"/>
<dbReference type="InParanoid" id="Q9CAF9"/>
<dbReference type="OMA" id="KTRRRDH"/>
<dbReference type="PhylomeDB" id="Q9CAF9"/>
<dbReference type="PRO" id="PR:Q9CAF9"/>
<dbReference type="Proteomes" id="UP000006548">
    <property type="component" value="Chromosome 1"/>
</dbReference>
<dbReference type="ExpressionAtlas" id="Q9CAF9">
    <property type="expression patterns" value="baseline and differential"/>
</dbReference>
<dbReference type="GO" id="GO:0005739">
    <property type="term" value="C:mitochondrion"/>
    <property type="evidence" value="ECO:0007005"/>
    <property type="project" value="TAIR"/>
</dbReference>
<dbReference type="FunFam" id="3.30.460.10:FF:000018">
    <property type="entry name" value="Mitochondrial assembly of ribosomal large subunit 1"/>
    <property type="match status" value="1"/>
</dbReference>
<dbReference type="Gene3D" id="3.30.460.10">
    <property type="entry name" value="Beta Polymerase, domain 2"/>
    <property type="match status" value="1"/>
</dbReference>
<dbReference type="HAMAP" id="MF_01477">
    <property type="entry name" value="Iojap_RsfS"/>
    <property type="match status" value="1"/>
</dbReference>
<dbReference type="InterPro" id="IPR004394">
    <property type="entry name" value="Iojap/RsfS/C7orf30"/>
</dbReference>
<dbReference type="InterPro" id="IPR043519">
    <property type="entry name" value="NT_sf"/>
</dbReference>
<dbReference type="NCBIfam" id="TIGR00090">
    <property type="entry name" value="rsfS_iojap_ybeB"/>
    <property type="match status" value="1"/>
</dbReference>
<dbReference type="PANTHER" id="PTHR21043">
    <property type="entry name" value="IOJAP SUPERFAMILY ORTHOLOG"/>
    <property type="match status" value="1"/>
</dbReference>
<dbReference type="PANTHER" id="PTHR21043:SF0">
    <property type="entry name" value="MITOCHONDRIAL ASSEMBLY OF RIBOSOMAL LARGE SUBUNIT PROTEIN 1"/>
    <property type="match status" value="1"/>
</dbReference>
<dbReference type="Pfam" id="PF02410">
    <property type="entry name" value="RsfS"/>
    <property type="match status" value="1"/>
</dbReference>
<dbReference type="SUPFAM" id="SSF81301">
    <property type="entry name" value="Nucleotidyltransferase"/>
    <property type="match status" value="1"/>
</dbReference>
<accession>Q9CAF9</accession>
<accession>Q8LGB8</accession>
<feature type="transit peptide" description="Mitochondrion" evidence="1">
    <location>
        <begin position="1"/>
        <end position="39"/>
    </location>
</feature>
<feature type="chain" id="PRO_0000419745" description="Protein Iojap-related, mitochondrial">
    <location>
        <begin position="40"/>
        <end position="184"/>
    </location>
</feature>
<feature type="sequence conflict" description="In Ref. 5; AAM60940." evidence="3" ref="5">
    <original>N</original>
    <variation>D</variation>
    <location>
        <position position="15"/>
    </location>
</feature>
<feature type="sequence conflict" description="In Ref. 5; AAM60940." evidence="3" ref="5">
    <original>S</original>
    <variation>T</variation>
    <location>
        <position position="35"/>
    </location>
</feature>
<organism>
    <name type="scientific">Arabidopsis thaliana</name>
    <name type="common">Mouse-ear cress</name>
    <dbReference type="NCBI Taxonomy" id="3702"/>
    <lineage>
        <taxon>Eukaryota</taxon>
        <taxon>Viridiplantae</taxon>
        <taxon>Streptophyta</taxon>
        <taxon>Embryophyta</taxon>
        <taxon>Tracheophyta</taxon>
        <taxon>Spermatophyta</taxon>
        <taxon>Magnoliopsida</taxon>
        <taxon>eudicotyledons</taxon>
        <taxon>Gunneridae</taxon>
        <taxon>Pentapetalae</taxon>
        <taxon>rosids</taxon>
        <taxon>malvids</taxon>
        <taxon>Brassicales</taxon>
        <taxon>Brassicaceae</taxon>
        <taxon>Camelineae</taxon>
        <taxon>Arabidopsis</taxon>
    </lineage>
</organism>
<sequence length="184" mass="20550">MLTTLRSRCSSLLLNQSWKLAPNRIFASSPSFSSSAGISNVSEILTLPEVEKILADVKADNVTVIPTHNHCFWADFTVIATGRSDWHLRNIAQALVYRAKQKQKGAKHVMLPSVQGYNSKWIVIDYGKFVVHALDEKARGYFNLESLWSAESSGTDTSDQDLQNVFVKVRPKNNSKRKPAKVSS</sequence>
<gene>
    <name type="ordered locus">At1g67620</name>
    <name type="ORF">F12B7.17</name>
</gene>
<proteinExistence type="evidence at transcript level"/>
<name>IOJAM_ARATH</name>
<comment type="function">
    <text evidence="2">May be a ribosome silencing factor involved in organelle biogenesis and required for germination.</text>
</comment>
<comment type="subcellular location">
    <subcellularLocation>
        <location evidence="2">Mitochondrion</location>
    </subcellularLocation>
</comment>
<comment type="similarity">
    <text evidence="3">Belongs to the Iojap/RsfS family.</text>
</comment>
<keyword id="KW-0496">Mitochondrion</keyword>
<keyword id="KW-1185">Reference proteome</keyword>
<keyword id="KW-0809">Transit peptide</keyword>